<name>RBFA_DESOH</name>
<gene>
    <name evidence="1" type="primary">rbfA</name>
    <name type="ordered locus">Dole_3033</name>
</gene>
<proteinExistence type="inferred from homology"/>
<dbReference type="EMBL" id="CP000859">
    <property type="protein sequence ID" value="ABW68836.1"/>
    <property type="molecule type" value="Genomic_DNA"/>
</dbReference>
<dbReference type="RefSeq" id="WP_012176447.1">
    <property type="nucleotide sequence ID" value="NC_009943.1"/>
</dbReference>
<dbReference type="SMR" id="A8ZZ63"/>
<dbReference type="STRING" id="96561.Dole_3033"/>
<dbReference type="KEGG" id="dol:Dole_3033"/>
<dbReference type="eggNOG" id="COG0858">
    <property type="taxonomic scope" value="Bacteria"/>
</dbReference>
<dbReference type="HOGENOM" id="CLU_089475_3_1_7"/>
<dbReference type="OrthoDB" id="307788at2"/>
<dbReference type="Proteomes" id="UP000008561">
    <property type="component" value="Chromosome"/>
</dbReference>
<dbReference type="GO" id="GO:0005829">
    <property type="term" value="C:cytosol"/>
    <property type="evidence" value="ECO:0007669"/>
    <property type="project" value="TreeGrafter"/>
</dbReference>
<dbReference type="GO" id="GO:0043024">
    <property type="term" value="F:ribosomal small subunit binding"/>
    <property type="evidence" value="ECO:0007669"/>
    <property type="project" value="TreeGrafter"/>
</dbReference>
<dbReference type="GO" id="GO:0030490">
    <property type="term" value="P:maturation of SSU-rRNA"/>
    <property type="evidence" value="ECO:0007669"/>
    <property type="project" value="UniProtKB-UniRule"/>
</dbReference>
<dbReference type="Gene3D" id="3.30.300.20">
    <property type="match status" value="1"/>
</dbReference>
<dbReference type="HAMAP" id="MF_00003">
    <property type="entry name" value="RbfA"/>
    <property type="match status" value="1"/>
</dbReference>
<dbReference type="InterPro" id="IPR015946">
    <property type="entry name" value="KH_dom-like_a/b"/>
</dbReference>
<dbReference type="InterPro" id="IPR000238">
    <property type="entry name" value="RbfA"/>
</dbReference>
<dbReference type="InterPro" id="IPR023799">
    <property type="entry name" value="RbfA_dom_sf"/>
</dbReference>
<dbReference type="InterPro" id="IPR020053">
    <property type="entry name" value="Ribosome-bd_factorA_CS"/>
</dbReference>
<dbReference type="NCBIfam" id="TIGR00082">
    <property type="entry name" value="rbfA"/>
    <property type="match status" value="1"/>
</dbReference>
<dbReference type="PANTHER" id="PTHR33515">
    <property type="entry name" value="RIBOSOME-BINDING FACTOR A, CHLOROPLASTIC-RELATED"/>
    <property type="match status" value="1"/>
</dbReference>
<dbReference type="PANTHER" id="PTHR33515:SF1">
    <property type="entry name" value="RIBOSOME-BINDING FACTOR A, CHLOROPLASTIC-RELATED"/>
    <property type="match status" value="1"/>
</dbReference>
<dbReference type="Pfam" id="PF02033">
    <property type="entry name" value="RBFA"/>
    <property type="match status" value="1"/>
</dbReference>
<dbReference type="SUPFAM" id="SSF89919">
    <property type="entry name" value="Ribosome-binding factor A, RbfA"/>
    <property type="match status" value="1"/>
</dbReference>
<dbReference type="PROSITE" id="PS01319">
    <property type="entry name" value="RBFA"/>
    <property type="match status" value="1"/>
</dbReference>
<protein>
    <recommendedName>
        <fullName evidence="1">Ribosome-binding factor A</fullName>
    </recommendedName>
</protein>
<feature type="chain" id="PRO_1000088884" description="Ribosome-binding factor A">
    <location>
        <begin position="1"/>
        <end position="129"/>
    </location>
</feature>
<keyword id="KW-0963">Cytoplasm</keyword>
<keyword id="KW-1185">Reference proteome</keyword>
<keyword id="KW-0690">Ribosome biogenesis</keyword>
<accession>A8ZZ63</accession>
<reference key="1">
    <citation type="submission" date="2007-10" db="EMBL/GenBank/DDBJ databases">
        <title>Complete sequence of Desulfococcus oleovorans Hxd3.</title>
        <authorList>
            <consortium name="US DOE Joint Genome Institute"/>
            <person name="Copeland A."/>
            <person name="Lucas S."/>
            <person name="Lapidus A."/>
            <person name="Barry K."/>
            <person name="Glavina del Rio T."/>
            <person name="Dalin E."/>
            <person name="Tice H."/>
            <person name="Pitluck S."/>
            <person name="Kiss H."/>
            <person name="Brettin T."/>
            <person name="Bruce D."/>
            <person name="Detter J.C."/>
            <person name="Han C."/>
            <person name="Schmutz J."/>
            <person name="Larimer F."/>
            <person name="Land M."/>
            <person name="Hauser L."/>
            <person name="Kyrpides N."/>
            <person name="Kim E."/>
            <person name="Wawrik B."/>
            <person name="Richardson P."/>
        </authorList>
    </citation>
    <scope>NUCLEOTIDE SEQUENCE [LARGE SCALE GENOMIC DNA]</scope>
    <source>
        <strain>DSM 6200 / JCM 39069 / Hxd3</strain>
    </source>
</reference>
<comment type="function">
    <text evidence="1">One of several proteins that assist in the late maturation steps of the functional core of the 30S ribosomal subunit. Associates with free 30S ribosomal subunits (but not with 30S subunits that are part of 70S ribosomes or polysomes). Required for efficient processing of 16S rRNA. May interact with the 5'-terminal helix region of 16S rRNA.</text>
</comment>
<comment type="subunit">
    <text evidence="1">Monomer. Binds 30S ribosomal subunits, but not 50S ribosomal subunits or 70S ribosomes.</text>
</comment>
<comment type="subcellular location">
    <subcellularLocation>
        <location evidence="1">Cytoplasm</location>
    </subcellularLocation>
</comment>
<comment type="similarity">
    <text evidence="1">Belongs to the RbfA family.</text>
</comment>
<organism>
    <name type="scientific">Desulfosudis oleivorans (strain DSM 6200 / JCM 39069 / Hxd3)</name>
    <name type="common">Desulfococcus oleovorans</name>
    <dbReference type="NCBI Taxonomy" id="96561"/>
    <lineage>
        <taxon>Bacteria</taxon>
        <taxon>Pseudomonadati</taxon>
        <taxon>Thermodesulfobacteriota</taxon>
        <taxon>Desulfobacteria</taxon>
        <taxon>Desulfobacterales</taxon>
        <taxon>Desulfosudaceae</taxon>
        <taxon>Desulfosudis</taxon>
    </lineage>
</organism>
<sequence>MKSFPRADRIGSSIQRGVSEILRKGLGDPRLDMATITGVKVSRDLGVAYVYYVIPGDTAGRAAAAAGFKSAEGFIKRSLAGMLKMKYMPDIRFRYDESFAYGQSIDTVLRELQTEKDDVPDSGRPPEDD</sequence>
<evidence type="ECO:0000255" key="1">
    <source>
        <dbReference type="HAMAP-Rule" id="MF_00003"/>
    </source>
</evidence>